<comment type="function">
    <text evidence="2 3 4 5">Transcriptional regulator that represses the expression of the lsr operon (lsrACDBFG-tam) in the absence of the quorum-sensing signaling molecule autoinducer 2 (AI-2) (PubMed:15743955, PubMed:16321939, PubMed:19636340). It also represses the expression of the lsrRK operon (PubMed:15743955, PubMed:16321939, PubMed:19636340). Acts by binding directly to the lsrA and lsrR promoter regions (PubMed:19636340). In the presence of phosphorylated autoinducer-2 (phospho-AI-2), LsrR is inactivated, leading to the transcription of the genes (PubMed:15743955, PubMed:16321939, PubMed:19636340). In addition to controlling the transcription of the lsr and lsrRK operons, LsrR may act as a global regulator that regulates the expression of a variety of genes, including genes involved in biofilm formation, host invasion and stress responses (PubMed:17557827). It also regulates the expression of several small RNAs (sRNAs), including DsrA (PubMed:17557827).</text>
</comment>
<comment type="activity regulation">
    <text evidence="1 2 4 5 6">Inactivated by phosphorylated autoinducer-2 (phospho-AI-2) (PubMed:15743955, PubMed:19636340, PubMed:23589368). Phospho-AI-2 acts by binding to LsrR, which is then unable to bind to the promoter regions, allowing the transcription of the target genes (PubMed:19636340). Phospho-AI-2 triggers the disassembly of the tetramer into dimers and reduces the DNA binding ability of LsrR (PubMed:23589368). Dihydroxyacetone phosphate (DHAP) may act as an anti-inducer and inhibit binding of phospho-AI-2 to LsrR, preventing induction of transcription of the lsr operon (PubMed:15601708). May also be regulated by unphosphorylated AI-2, which may bind to LsrR and derepresses the transcription of a variety of genes (PubMed:17557827).</text>
</comment>
<comment type="subunit">
    <text evidence="6 7">Homotetramer (PubMed:23589368, PubMed:24047255). Dimer of dimers (PubMed:23589368, PubMed:24047255). Interaction with phospho-AI-2 triggers the disassembly of the tetramer into dimers (PubMed:23589368, PubMed:24047255).</text>
</comment>
<comment type="subcellular location">
    <subcellularLocation>
        <location evidence="9">Cytoplasm</location>
    </subcellularLocation>
</comment>
<comment type="induction">
    <text evidence="3">Autorepressed (PubMed:16321939). Part of the lsrRK operon, which is positively regulated by cyclic AMP-cyclic AMP receptor protein (cAMP-CRP) in the absence of glucose and negatively regulated by LsrR (PubMed:16321939).</text>
</comment>
<comment type="domain">
    <text evidence="6 7">Contains an N-terminal DNA-binding domain and a C-terminal ligand-binding domain, connected by a linker region.</text>
</comment>
<comment type="disruption phenotype">
    <text evidence="2 4">Deletion of the gene causes a significant increase in expression of the lsr operon and results in accelerated removal of AI-2 from extracellular fluids (PubMed:15743955). Deletion of the gene affects the expression of a number of genes associated with attachment, defense and pathogenicity (PubMed:17557827). It also affects sRNA expression (PubMed:17557827).</text>
</comment>
<comment type="similarity">
    <text evidence="9">Belongs to the SorC transcriptional regulatory family.</text>
</comment>
<sequence>MTINDSAISEQGMCEEEQVARIAWFYYHDGLTQSEISDRLGLTRLKVSRLLEKGHQSGIIRVQINSRFEGCLEYETQLRRQFSLQHVRVIPGLADADVGGRLGIGAAHMLMSLLQPQQMLAIGFGEATMNTLQRLSGFISSQQIRLVTLSGGVGSYMTGIGQLNAACSVNIIPAPLRASSADIARTLKNENCVKDVLLAAQAADVAIVGIGAVSQQDDATIIRSGYISQGEQLMIGRKGAVGDILGYFFDAKGDVVTNIKIHNELIGLPLSALKTIPVRVGVAGGENKAEAIAAAMKGGYINALVTDQDTAAAILRS</sequence>
<proteinExistence type="evidence at protein level"/>
<keyword id="KW-0002">3D-structure</keyword>
<keyword id="KW-0010">Activator</keyword>
<keyword id="KW-0963">Cytoplasm</keyword>
<keyword id="KW-0238">DNA-binding</keyword>
<keyword id="KW-1185">Reference proteome</keyword>
<keyword id="KW-0678">Repressor</keyword>
<keyword id="KW-0804">Transcription</keyword>
<keyword id="KW-0805">Transcription regulation</keyword>
<dbReference type="EMBL" id="U00096">
    <property type="protein sequence ID" value="AAC74585.1"/>
    <property type="molecule type" value="Genomic_DNA"/>
</dbReference>
<dbReference type="EMBL" id="AP009048">
    <property type="protein sequence ID" value="BAA15192.2"/>
    <property type="molecule type" value="Genomic_DNA"/>
</dbReference>
<dbReference type="PIR" id="C64905">
    <property type="entry name" value="C64905"/>
</dbReference>
<dbReference type="RefSeq" id="NP_416029.1">
    <property type="nucleotide sequence ID" value="NC_000913.3"/>
</dbReference>
<dbReference type="RefSeq" id="WP_000154342.1">
    <property type="nucleotide sequence ID" value="NZ_SSZK01000001.1"/>
</dbReference>
<dbReference type="PDB" id="4GO1">
    <property type="method" value="X-ray"/>
    <property type="resolution" value="3.00 A"/>
    <property type="chains" value="A/B=1-317"/>
</dbReference>
<dbReference type="PDB" id="4L4Y">
    <property type="method" value="X-ray"/>
    <property type="resolution" value="1.90 A"/>
    <property type="chains" value="A/B=53-317"/>
</dbReference>
<dbReference type="PDB" id="4L4Z">
    <property type="method" value="X-ray"/>
    <property type="resolution" value="2.30 A"/>
    <property type="chains" value="A/B=53-317"/>
</dbReference>
<dbReference type="PDB" id="4L50">
    <property type="method" value="X-ray"/>
    <property type="resolution" value="2.10 A"/>
    <property type="chains" value="A/B=53-317"/>
</dbReference>
<dbReference type="PDB" id="4L51">
    <property type="method" value="X-ray"/>
    <property type="resolution" value="1.90 A"/>
    <property type="chains" value="A/B=53-317"/>
</dbReference>
<dbReference type="PDB" id="4L5I">
    <property type="method" value="X-ray"/>
    <property type="resolution" value="3.21 A"/>
    <property type="chains" value="A/B/C/D=1-317"/>
</dbReference>
<dbReference type="PDB" id="4L5J">
    <property type="method" value="X-ray"/>
    <property type="resolution" value="2.60 A"/>
    <property type="chains" value="A/B/C/D=1-317"/>
</dbReference>
<dbReference type="PDBsum" id="4GO1"/>
<dbReference type="PDBsum" id="4L4Y"/>
<dbReference type="PDBsum" id="4L4Z"/>
<dbReference type="PDBsum" id="4L50"/>
<dbReference type="PDBsum" id="4L51"/>
<dbReference type="PDBsum" id="4L5I"/>
<dbReference type="PDBsum" id="4L5J"/>
<dbReference type="SMR" id="P76141"/>
<dbReference type="BioGRID" id="4260225">
    <property type="interactions" value="120"/>
</dbReference>
<dbReference type="DIP" id="DIP-11688N"/>
<dbReference type="FunCoup" id="P76141">
    <property type="interactions" value="84"/>
</dbReference>
<dbReference type="IntAct" id="P76141">
    <property type="interactions" value="5"/>
</dbReference>
<dbReference type="STRING" id="511145.b1512"/>
<dbReference type="jPOST" id="P76141"/>
<dbReference type="PaxDb" id="511145-b1512"/>
<dbReference type="EnsemblBacteria" id="AAC74585">
    <property type="protein sequence ID" value="AAC74585"/>
    <property type="gene ID" value="b1512"/>
</dbReference>
<dbReference type="GeneID" id="946070"/>
<dbReference type="KEGG" id="ecj:JW1505"/>
<dbReference type="KEGG" id="eco:b1512"/>
<dbReference type="KEGG" id="ecoc:C3026_08745"/>
<dbReference type="PATRIC" id="fig|1411691.4.peg.755"/>
<dbReference type="EchoBASE" id="EB3566"/>
<dbReference type="eggNOG" id="COG2390">
    <property type="taxonomic scope" value="Bacteria"/>
</dbReference>
<dbReference type="HOGENOM" id="CLU_054506_0_1_6"/>
<dbReference type="InParanoid" id="P76141"/>
<dbReference type="OMA" id="WGRSTIH"/>
<dbReference type="OrthoDB" id="7065657at2"/>
<dbReference type="PhylomeDB" id="P76141"/>
<dbReference type="BioCyc" id="EcoCyc:G6799-MONOMER"/>
<dbReference type="EvolutionaryTrace" id="P76141"/>
<dbReference type="PHI-base" id="PHI:9991"/>
<dbReference type="PRO" id="PR:P76141"/>
<dbReference type="Proteomes" id="UP000000625">
    <property type="component" value="Chromosome"/>
</dbReference>
<dbReference type="GO" id="GO:0005829">
    <property type="term" value="C:cytosol"/>
    <property type="evidence" value="ECO:0000314"/>
    <property type="project" value="EcoCyc"/>
</dbReference>
<dbReference type="GO" id="GO:0030246">
    <property type="term" value="F:carbohydrate binding"/>
    <property type="evidence" value="ECO:0007669"/>
    <property type="project" value="InterPro"/>
</dbReference>
<dbReference type="GO" id="GO:0000987">
    <property type="term" value="F:cis-regulatory region sequence-specific DNA binding"/>
    <property type="evidence" value="ECO:0000314"/>
    <property type="project" value="EcoCyc"/>
</dbReference>
<dbReference type="GO" id="GO:0042802">
    <property type="term" value="F:identical protein binding"/>
    <property type="evidence" value="ECO:0000314"/>
    <property type="project" value="EcoCyc"/>
</dbReference>
<dbReference type="GO" id="GO:0006351">
    <property type="term" value="P:DNA-templated transcription"/>
    <property type="evidence" value="ECO:0000270"/>
    <property type="project" value="EcoCyc"/>
</dbReference>
<dbReference type="GO" id="GO:2000142">
    <property type="term" value="P:regulation of DNA-templated transcription initiation"/>
    <property type="evidence" value="ECO:0000315"/>
    <property type="project" value="EcoCyc"/>
</dbReference>
<dbReference type="GO" id="GO:0009408">
    <property type="term" value="P:response to heat"/>
    <property type="evidence" value="ECO:0000315"/>
    <property type="project" value="EcoCyc"/>
</dbReference>
<dbReference type="FunFam" id="1.10.10.10:FF:000195">
    <property type="entry name" value="LsrR family transcriptional regulator"/>
    <property type="match status" value="1"/>
</dbReference>
<dbReference type="FunFam" id="3.40.50.1360:FF:000012">
    <property type="entry name" value="LsrR family transcriptional regulator"/>
    <property type="match status" value="1"/>
</dbReference>
<dbReference type="Gene3D" id="3.40.50.1360">
    <property type="match status" value="1"/>
</dbReference>
<dbReference type="Gene3D" id="1.10.10.10">
    <property type="entry name" value="Winged helix-like DNA-binding domain superfamily/Winged helix DNA-binding domain"/>
    <property type="match status" value="1"/>
</dbReference>
<dbReference type="InterPro" id="IPR037171">
    <property type="entry name" value="NagB/RpiA_transferase-like"/>
</dbReference>
<dbReference type="InterPro" id="IPR051054">
    <property type="entry name" value="SorC_transcr_regulators"/>
</dbReference>
<dbReference type="InterPro" id="IPR007324">
    <property type="entry name" value="Sugar-bd_dom_put"/>
</dbReference>
<dbReference type="InterPro" id="IPR036388">
    <property type="entry name" value="WH-like_DNA-bd_sf"/>
</dbReference>
<dbReference type="NCBIfam" id="NF011947">
    <property type="entry name" value="PRK15418.1"/>
    <property type="match status" value="1"/>
</dbReference>
<dbReference type="PANTHER" id="PTHR34294:SF1">
    <property type="entry name" value="TRANSCRIPTIONAL REGULATOR LSRR"/>
    <property type="match status" value="1"/>
</dbReference>
<dbReference type="PANTHER" id="PTHR34294">
    <property type="entry name" value="TRANSCRIPTIONAL REGULATOR-RELATED"/>
    <property type="match status" value="1"/>
</dbReference>
<dbReference type="Pfam" id="PF04198">
    <property type="entry name" value="Sugar-bind"/>
    <property type="match status" value="1"/>
</dbReference>
<dbReference type="SUPFAM" id="SSF100950">
    <property type="entry name" value="NagB/RpiA/CoA transferase-like"/>
    <property type="match status" value="1"/>
</dbReference>
<name>LSRR_ECOLI</name>
<feature type="chain" id="PRO_0000062790" description="Transcriptional regulator LsrR">
    <location>
        <begin position="1"/>
        <end position="317"/>
    </location>
</feature>
<feature type="DNA-binding region" description="H-T-H motif" evidence="10">
    <location>
        <begin position="33"/>
        <end position="56"/>
    </location>
</feature>
<feature type="mutagenesis site" description="Greatly reduces the DNA binding ability. Retains tetrameric assembly." evidence="6">
    <original>Y</original>
    <variation>H</variation>
    <location>
        <position position="26"/>
    </location>
</feature>
<feature type="mutagenesis site" description="Greatly reduces the DNA binding ability. Retains tetrameric assembly." evidence="6">
    <original>Q</original>
    <variation>A</variation>
    <location>
        <position position="33"/>
    </location>
</feature>
<feature type="mutagenesis site" description="Moderate decrease in affinity for phospho-AI-2." evidence="7">
    <original>Q</original>
    <variation>A</variation>
    <location>
        <position position="215"/>
    </location>
</feature>
<feature type="mutagenesis site" description="Decreases affinity for phospho-AI-2." evidence="7">
    <original>T</original>
    <variation>A</variation>
    <location>
        <position position="220"/>
    </location>
</feature>
<feature type="mutagenesis site" description="Forms tetramers in the presence or absence of phospho-AI-2. Decreases affinity for phospho-AI-2." evidence="6 7">
    <original>D</original>
    <variation>A</variation>
    <location>
        <position position="243"/>
    </location>
</feature>
<feature type="mutagenesis site" description="Forms tetramers in the presence or absence of phospho-AI-2. Decreases affinity for phospho-AI-2." evidence="6 7">
    <original>K</original>
    <variation>A</variation>
    <location>
        <position position="288"/>
    </location>
</feature>
<feature type="sequence conflict" description="In Ref. 1." evidence="9" ref="1">
    <original>GAVGDILGYFFDAKGDVVTNIKIHNELIGLPLSALKTIPVRVGVAGGENKAEAIAAAMKGGYINALVTDQDTAAAILRS</original>
    <variation>RGGWRHFRLLF</variation>
    <location>
        <begin position="239"/>
        <end position="317"/>
    </location>
</feature>
<feature type="helix" evidence="21">
    <location>
        <begin position="15"/>
        <end position="27"/>
    </location>
</feature>
<feature type="helix" evidence="21">
    <location>
        <begin position="35"/>
        <end position="40"/>
    </location>
</feature>
<feature type="helix" evidence="21">
    <location>
        <begin position="44"/>
        <end position="57"/>
    </location>
</feature>
<feature type="strand" evidence="21">
    <location>
        <begin position="58"/>
        <end position="64"/>
    </location>
</feature>
<feature type="helix" evidence="19">
    <location>
        <begin position="71"/>
        <end position="81"/>
    </location>
</feature>
<feature type="strand" evidence="19">
    <location>
        <begin position="85"/>
        <end position="90"/>
    </location>
</feature>
<feature type="helix" evidence="19">
    <location>
        <begin position="98"/>
        <end position="113"/>
    </location>
</feature>
<feature type="strand" evidence="19">
    <location>
        <begin position="119"/>
        <end position="122"/>
    </location>
</feature>
<feature type="helix" evidence="19">
    <location>
        <begin position="126"/>
        <end position="141"/>
    </location>
</feature>
<feature type="strand" evidence="19">
    <location>
        <begin position="145"/>
        <end position="151"/>
    </location>
</feature>
<feature type="helix" evidence="19">
    <location>
        <begin position="154"/>
        <end position="156"/>
    </location>
</feature>
<feature type="helix" evidence="19">
    <location>
        <begin position="157"/>
        <end position="160"/>
    </location>
</feature>
<feature type="strand" evidence="18">
    <location>
        <begin position="161"/>
        <end position="163"/>
    </location>
</feature>
<feature type="strand" evidence="21">
    <location>
        <begin position="165"/>
        <end position="167"/>
    </location>
</feature>
<feature type="helix" evidence="19">
    <location>
        <begin position="181"/>
        <end position="189"/>
    </location>
</feature>
<feature type="helix" evidence="19">
    <location>
        <begin position="191"/>
        <end position="201"/>
    </location>
</feature>
<feature type="strand" evidence="19">
    <location>
        <begin position="204"/>
        <end position="208"/>
    </location>
</feature>
<feature type="helix" evidence="20">
    <location>
        <begin position="213"/>
        <end position="218"/>
    </location>
</feature>
<feature type="helix" evidence="20">
    <location>
        <begin position="220"/>
        <end position="223"/>
    </location>
</feature>
<feature type="helix" evidence="19">
    <location>
        <begin position="229"/>
        <end position="237"/>
    </location>
</feature>
<feature type="strand" evidence="19">
    <location>
        <begin position="242"/>
        <end position="244"/>
    </location>
</feature>
<feature type="strand" evidence="19">
    <location>
        <begin position="247"/>
        <end position="249"/>
    </location>
</feature>
<feature type="helix" evidence="19">
    <location>
        <begin position="261"/>
        <end position="264"/>
    </location>
</feature>
<feature type="helix" evidence="19">
    <location>
        <begin position="270"/>
        <end position="273"/>
    </location>
</feature>
<feature type="strand" evidence="19">
    <location>
        <begin position="276"/>
        <end position="282"/>
    </location>
</feature>
<feature type="helix" evidence="19">
    <location>
        <begin position="286"/>
        <end position="288"/>
    </location>
</feature>
<feature type="helix" evidence="19">
    <location>
        <begin position="289"/>
        <end position="297"/>
    </location>
</feature>
<feature type="strand" evidence="19">
    <location>
        <begin position="302"/>
        <end position="307"/>
    </location>
</feature>
<feature type="helix" evidence="19">
    <location>
        <begin position="308"/>
        <end position="315"/>
    </location>
</feature>
<evidence type="ECO:0000269" key="1">
    <source>
    </source>
</evidence>
<evidence type="ECO:0000269" key="2">
    <source>
    </source>
</evidence>
<evidence type="ECO:0000269" key="3">
    <source>
    </source>
</evidence>
<evidence type="ECO:0000269" key="4">
    <source>
    </source>
</evidence>
<evidence type="ECO:0000269" key="5">
    <source>
    </source>
</evidence>
<evidence type="ECO:0000269" key="6">
    <source>
    </source>
</evidence>
<evidence type="ECO:0000269" key="7">
    <source>
    </source>
</evidence>
<evidence type="ECO:0000303" key="8">
    <source>
    </source>
</evidence>
<evidence type="ECO:0000305" key="9"/>
<evidence type="ECO:0000305" key="10">
    <source>
    </source>
</evidence>
<evidence type="ECO:0007744" key="11">
    <source>
        <dbReference type="PDB" id="4GO1"/>
    </source>
</evidence>
<evidence type="ECO:0007744" key="12">
    <source>
        <dbReference type="PDB" id="4L4Y"/>
    </source>
</evidence>
<evidence type="ECO:0007744" key="13">
    <source>
        <dbReference type="PDB" id="4L4Z"/>
    </source>
</evidence>
<evidence type="ECO:0007744" key="14">
    <source>
        <dbReference type="PDB" id="4L50"/>
    </source>
</evidence>
<evidence type="ECO:0007744" key="15">
    <source>
        <dbReference type="PDB" id="4L51"/>
    </source>
</evidence>
<evidence type="ECO:0007744" key="16">
    <source>
        <dbReference type="PDB" id="4L5I"/>
    </source>
</evidence>
<evidence type="ECO:0007744" key="17">
    <source>
        <dbReference type="PDB" id="4L5J"/>
    </source>
</evidence>
<evidence type="ECO:0007829" key="18">
    <source>
        <dbReference type="PDB" id="4GO1"/>
    </source>
</evidence>
<evidence type="ECO:0007829" key="19">
    <source>
        <dbReference type="PDB" id="4L4Y"/>
    </source>
</evidence>
<evidence type="ECO:0007829" key="20">
    <source>
        <dbReference type="PDB" id="4L51"/>
    </source>
</evidence>
<evidence type="ECO:0007829" key="21">
    <source>
        <dbReference type="PDB" id="4L5J"/>
    </source>
</evidence>
<protein>
    <recommendedName>
        <fullName evidence="9">Transcriptional regulator LsrR</fullName>
    </recommendedName>
    <alternativeName>
        <fullName evidence="8">lsr regulator</fullName>
    </alternativeName>
</protein>
<reference key="1">
    <citation type="journal article" date="1996" name="DNA Res.">
        <title>A 570-kb DNA sequence of the Escherichia coli K-12 genome corresponding to the 28.0-40.1 min region on the linkage map.</title>
        <authorList>
            <person name="Aiba H."/>
            <person name="Baba T."/>
            <person name="Fujita K."/>
            <person name="Hayashi K."/>
            <person name="Inada T."/>
            <person name="Isono K."/>
            <person name="Itoh T."/>
            <person name="Kasai H."/>
            <person name="Kashimoto K."/>
            <person name="Kimura S."/>
            <person name="Kitakawa M."/>
            <person name="Kitagawa M."/>
            <person name="Makino K."/>
            <person name="Miki T."/>
            <person name="Mizobuchi K."/>
            <person name="Mori H."/>
            <person name="Mori T."/>
            <person name="Motomura K."/>
            <person name="Nakade S."/>
            <person name="Nakamura Y."/>
            <person name="Nashimoto H."/>
            <person name="Nishio Y."/>
            <person name="Oshima T."/>
            <person name="Saito N."/>
            <person name="Sampei G."/>
            <person name="Seki Y."/>
            <person name="Sivasundaram S."/>
            <person name="Tagami H."/>
            <person name="Takeda J."/>
            <person name="Takemoto K."/>
            <person name="Takeuchi Y."/>
            <person name="Wada C."/>
            <person name="Yamamoto Y."/>
            <person name="Horiuchi T."/>
        </authorList>
    </citation>
    <scope>NUCLEOTIDE SEQUENCE [LARGE SCALE GENOMIC DNA]</scope>
    <source>
        <strain>K12 / W3110 / ATCC 27325 / DSM 5911</strain>
    </source>
</reference>
<reference key="2">
    <citation type="journal article" date="1997" name="Science">
        <title>The complete genome sequence of Escherichia coli K-12.</title>
        <authorList>
            <person name="Blattner F.R."/>
            <person name="Plunkett G. III"/>
            <person name="Bloch C.A."/>
            <person name="Perna N.T."/>
            <person name="Burland V."/>
            <person name="Riley M."/>
            <person name="Collado-Vides J."/>
            <person name="Glasner J.D."/>
            <person name="Rode C.K."/>
            <person name="Mayhew G.F."/>
            <person name="Gregor J."/>
            <person name="Davis N.W."/>
            <person name="Kirkpatrick H.A."/>
            <person name="Goeden M.A."/>
            <person name="Rose D.J."/>
            <person name="Mau B."/>
            <person name="Shao Y."/>
        </authorList>
    </citation>
    <scope>NUCLEOTIDE SEQUENCE [LARGE SCALE GENOMIC DNA]</scope>
    <source>
        <strain>K12 / MG1655 / ATCC 47076</strain>
    </source>
</reference>
<reference key="3">
    <citation type="journal article" date="2006" name="Mol. Syst. Biol.">
        <title>Highly accurate genome sequences of Escherichia coli K-12 strains MG1655 and W3110.</title>
        <authorList>
            <person name="Hayashi K."/>
            <person name="Morooka N."/>
            <person name="Yamamoto Y."/>
            <person name="Fujita K."/>
            <person name="Isono K."/>
            <person name="Choi S."/>
            <person name="Ohtsubo E."/>
            <person name="Baba T."/>
            <person name="Wanner B.L."/>
            <person name="Mori H."/>
            <person name="Horiuchi T."/>
        </authorList>
    </citation>
    <scope>NUCLEOTIDE SEQUENCE [LARGE SCALE GENOMIC DNA]</scope>
    <scope>SEQUENCE REVISION TO 239-317</scope>
    <source>
        <strain>K12 / W3110 / ATCC 27325 / DSM 5911</strain>
    </source>
</reference>
<reference key="4">
    <citation type="journal article" date="2005" name="J. Bacteriol.">
        <title>Regulation of uptake and processing of the quorum-sensing autoinducer AI-2 in Escherichia coli.</title>
        <authorList>
            <person name="Xavier K.B."/>
            <person name="Bassler B.L."/>
        </authorList>
    </citation>
    <scope>ACTIVITY REGULATION</scope>
    <source>
        <strain>K12 / MG1655 / ATCC 47076</strain>
    </source>
</reference>
<reference key="5">
    <citation type="journal article" date="2005" name="J. Bacteriol.">
        <title>Cyclic AMP (cAMP) and cAMP receptor protein influence both synthesis and uptake of extracellular autoinducer 2 in Escherichia coli.</title>
        <authorList>
            <person name="Wang L."/>
            <person name="Hashimoto Y."/>
            <person name="Tsao C.-Y."/>
            <person name="Valdes J.J."/>
            <person name="Bentley W.E."/>
        </authorList>
    </citation>
    <scope>FUNCTION</scope>
    <scope>ACTIVITY REGULATION</scope>
    <scope>DISRUPTION PHENOTYPE</scope>
    <source>
        <strain>K12 / W3110 / ATCC 27325 / DSM 5911</strain>
    </source>
</reference>
<reference key="6">
    <citation type="journal article" date="2005" name="J. Bacteriol.">
        <title>luxS-dependent gene regulation in Escherichia coli K-12 revealed by genomic expression profiling.</title>
        <authorList>
            <person name="Wang L."/>
            <person name="Li J."/>
            <person name="March J.C."/>
            <person name="Valdes J.J."/>
            <person name="Bentley W.E."/>
        </authorList>
    </citation>
    <scope>FUNCTION</scope>
    <scope>INDUCTION</scope>
    <source>
        <strain>K12 / W3110 / ATCC 27325 / DSM 5911</strain>
    </source>
</reference>
<reference key="7">
    <citation type="journal article" date="2007" name="J. Bacteriol.">
        <title>Quorum sensing in Escherichia coli is signaled by AI-2/LsrR: effects on small RNA and biofilm architecture.</title>
        <authorList>
            <person name="Li J."/>
            <person name="Attila C."/>
            <person name="Wang L."/>
            <person name="Wood T.K."/>
            <person name="Valdes J.J."/>
            <person name="Bentley W.E."/>
        </authorList>
    </citation>
    <scope>FUNCTION AS A GLOBAL REGULATOR</scope>
    <scope>ACTIVITY REGULATION</scope>
    <scope>DISRUPTION PHENOTYPE</scope>
</reference>
<reference key="8">
    <citation type="journal article" date="2009" name="Cell Res.">
        <title>LsrR-binding site recognition and regulatory characteristics in Escherichia coli AI-2 quorum sensing.</title>
        <authorList>
            <person name="Xue T."/>
            <person name="Zhao L."/>
            <person name="Sun H."/>
            <person name="Zhou X."/>
            <person name="Sun B."/>
        </authorList>
    </citation>
    <scope>FUNCTION</scope>
    <scope>DNA-BINDING</scope>
    <scope>ACTIVITY REGULATION</scope>
    <source>
        <strain>K12 / MG1655 / ATCC 47076</strain>
    </source>
</reference>
<reference evidence="12 13 14 15 16 17" key="9">
    <citation type="journal article" date="2013" name="J. Am. Chem. Soc.">
        <title>Crystal structures of the LsrR proteins complexed with phospho-AI-2 and two signal-interrupting analogues reveal distinct mechanisms for ligand recognition.</title>
        <authorList>
            <person name="Ha J.H."/>
            <person name="Eo Y."/>
            <person name="Grishaev A."/>
            <person name="Guo M."/>
            <person name="Smith J.A."/>
            <person name="Sintim H.O."/>
            <person name="Kim E.H."/>
            <person name="Cheong H.K."/>
            <person name="Bentley W.E."/>
            <person name="Ryu K.S."/>
        </authorList>
    </citation>
    <scope>X-RAY CRYSTALLOGRAPHY (1.90 ANGSTROMS) OF 53-317 IN COMPLEXES WITH PHOSPHO-AI-2 AND SIGNAL-INTERRUPTING ANALOGS</scope>
    <scope>SUBUNIT</scope>
    <scope>DOMAIN</scope>
    <scope>MUTAGENESIS OF GLN-215; THR-220; ASP-243 AND LYS-288</scope>
</reference>
<reference evidence="11" key="10">
    <citation type="journal article" date="2013" name="J. Biol. Chem.">
        <title>Structural basis for phosphorylated autoinducer-2 modulation of the oligomerization state of the global transcription regulator LsrR from Escherichia coli.</title>
        <authorList>
            <person name="Wu M."/>
            <person name="Tao Y."/>
            <person name="Liu X."/>
            <person name="Zang J."/>
        </authorList>
    </citation>
    <scope>X-RAY CRYSTALLOGRAPHY (3.00 ANGSTROMS)</scope>
    <scope>DNA-BINDING</scope>
    <scope>ACTIVITY REGULATION</scope>
    <scope>SUBUNIT</scope>
    <scope>DOMAIN</scope>
    <scope>MUTAGENESIS OF TYR-26; GLN-33; ASP-243 AND LYS-288</scope>
</reference>
<accession>P76141</accession>
<accession>P77190</accession>
<organism>
    <name type="scientific">Escherichia coli (strain K12)</name>
    <dbReference type="NCBI Taxonomy" id="83333"/>
    <lineage>
        <taxon>Bacteria</taxon>
        <taxon>Pseudomonadati</taxon>
        <taxon>Pseudomonadota</taxon>
        <taxon>Gammaproteobacteria</taxon>
        <taxon>Enterobacterales</taxon>
        <taxon>Enterobacteriaceae</taxon>
        <taxon>Escherichia</taxon>
    </lineage>
</organism>
<gene>
    <name type="primary">lsrR</name>
    <name type="synonym">ydeW</name>
    <name type="ordered locus">b1512</name>
    <name type="ordered locus">JW1505</name>
</gene>